<accession>Q5M854</accession>
<sequence length="526" mass="60590">MRLRNGTVATALVFVTSFLTLSWYTTWQNGKEKLIAYQREFLALKERLRVAEHRISQRSSELNTIVQQFRRAGAETNGNNTIKLLKELTSKKSLQVPSIYYHLPHLLQNERSLQPAVQIGSGRTGVSIVMGIPTVKREVKSYLIETLHSLIDNLYPEEKLDCVIVVFIGETDLDYVHSVVANLEKEFSREISSGLLEVISPPESYYPDLTNLKETFGDSKERVRWRTKQNLDYCFLMMYAQEKGIYYIQLEDDIIVKQNYFNTIKNFALQLSSEEWMILEFSQLGFIGKMFQAPDLALVVEFILMFYKEKPIDWLLDHILWVKVCNPEKDAKHCDRQKANLRIRFRPSLFQHVGLHSSLSGKIQKLTDKDYMKPLLLKIHVNPPAEVSTSLKVYQGHTLEKTYMGEDFFWAITPTAGDYILFKFDKPVNVESYLFHSGNQEHPGDILLNTTVEVLPLKSDSLEISKETKDKRLEDGYFRIGKFEYGVAEGIVDPGLNPISAFRLSVIQNSAVWAILNEIHIKKVTS</sequence>
<comment type="function">
    <text evidence="1 2">Glycosyltransferase that catalyze the transfer of GlcNAc from UDP-GlcNAc to the GlcNAcbeta1-2Manalpha1-3 arm of the core structure of N-linked glycans through a beta1-4 linkage and participates in the production of tri- and tetra-antennary N-linked sugar chains (By similarity). Involved in glucose transport by mediating SLC2A2/GLUT2 glycosylation, thereby controlling cell-surface expression of SLC2A2 in pancreatic beta cells (By similarity).</text>
</comment>
<comment type="catalytic activity">
    <reaction evidence="1">
        <text>N(4)-{beta-D-GlcNAc-(1-&gt;2)-alpha-D-Man-(1-&gt;3)-[beta-D-GlcNAc-(1-&gt;2)-alpha-D-Man-(1-&gt;6)]-beta-D-Man-(1-&gt;4)-beta-D-GlcNAc-(1-&gt;4)-beta-D-GlcNAc}-L-asparaginyl-[protein] + UDP-N-acetyl-alpha-D-glucosamine = N(4)-{beta-D-GlcNAc-(1-&gt;2)-[beta-D-GlcNAc-(1-&gt;4)]-alpha-D-Man-(1-&gt;3)-[beta-D-GlcNAc-(1-&gt;2)-alpha-D-Man-(1-&gt;6)]-beta-D-Man-(1-&gt;4)-beta-D-GlcNAc-(1-&gt;4)-beta-D-GlcNAc}-L-asparaginyl-[protein] + UDP + H(+)</text>
        <dbReference type="Rhea" id="RHEA:16057"/>
        <dbReference type="Rhea" id="RHEA-COMP:13526"/>
        <dbReference type="Rhea" id="RHEA-COMP:14374"/>
        <dbReference type="ChEBI" id="CHEBI:15378"/>
        <dbReference type="ChEBI" id="CHEBI:57705"/>
        <dbReference type="ChEBI" id="CHEBI:58223"/>
        <dbReference type="ChEBI" id="CHEBI:60651"/>
        <dbReference type="ChEBI" id="CHEBI:139507"/>
        <dbReference type="EC" id="2.4.1.145"/>
    </reaction>
    <physiologicalReaction direction="left-to-right" evidence="1">
        <dbReference type="Rhea" id="RHEA:16058"/>
    </physiologicalReaction>
</comment>
<comment type="catalytic activity">
    <reaction evidence="4">
        <text>an N(4)-{beta-D-GlcNAc-(1-&gt;2)-alpha-D-Man-(1-&gt;3)-[alpha-D-Man-(1-&gt;6)]-beta-D-Man-(1-&gt;4)-beta-D-GlcNAc-(1-&gt;4)-beta-D-GlcNAc}-L-asparaginyl-[protein] + UDP-N-acetyl-alpha-D-glucosamine = an N(4)-{beta-D-GlcNAc-(1-&gt;2)-[beta-D-GlcNAc-(1-&gt;4)]-alpha-D-Man-(1-&gt;3)-[alpha-D-Man-(1-&gt;6)]-beta-D-Man-(1-&gt;4)-beta-D-GlcNAc-(1-&gt;4)-beta-D-GlcNAc}-L-asparaginyl-[protein] + UDP + H(+)</text>
        <dbReference type="Rhea" id="RHEA:69615"/>
        <dbReference type="Rhea" id="RHEA-COMP:14369"/>
        <dbReference type="Rhea" id="RHEA-COMP:17732"/>
        <dbReference type="ChEBI" id="CHEBI:15378"/>
        <dbReference type="ChEBI" id="CHEBI:57705"/>
        <dbReference type="ChEBI" id="CHEBI:58223"/>
        <dbReference type="ChEBI" id="CHEBI:60615"/>
        <dbReference type="ChEBI" id="CHEBI:187873"/>
    </reaction>
    <physiologicalReaction direction="left-to-right" evidence="4">
        <dbReference type="Rhea" id="RHEA:69616"/>
    </physiologicalReaction>
</comment>
<comment type="catalytic activity">
    <reaction evidence="4">
        <text>an N(4)-{beta-D-GlcNAc-(1-&gt;2)-alpha-D-Man-(1-&gt;3)-[beta-D-GlcNAc-(1-&gt;2)-[beta-D-GlcNAc-(1-&gt;6)]-alpha-D-Man-(1-&gt;6)]-beta-D-Man-(1-&gt;4)-beta-D-GlcNAc-(1-&gt;4)-beta-D-GlcNAc}-L-asparaginyl-[protein] + UDP-N-acetyl-alpha-D-glucosamine = an N(4)-{beta-D-GlcNAc-(1-&gt;2)-[beta-D-GlcNAc-(1-&gt;4)]-alpha-D-Man-(1-&gt;3)-[beta-D-GlcNAc-(1-&gt;2)-[beta-D-GlcNAc-(1-&gt;6)]-alpha-D-Man-(1-&gt;6)]-beta-D-Man-(1-&gt;4)-beta-D-GlcNAc-(1-&gt;4)-beta-D-GlcNAc}-L-asparaginyl-[protein] + UDP + H(+)</text>
        <dbReference type="Rhea" id="RHEA:69619"/>
        <dbReference type="Rhea" id="RHEA-COMP:17733"/>
        <dbReference type="Rhea" id="RHEA-COMP:17734"/>
        <dbReference type="ChEBI" id="CHEBI:15378"/>
        <dbReference type="ChEBI" id="CHEBI:57705"/>
        <dbReference type="ChEBI" id="CHEBI:58223"/>
        <dbReference type="ChEBI" id="CHEBI:187874"/>
        <dbReference type="ChEBI" id="CHEBI:187875"/>
    </reaction>
    <physiologicalReaction direction="left-to-right" evidence="4">
        <dbReference type="Rhea" id="RHEA:69620"/>
    </physiologicalReaction>
</comment>
<comment type="catalytic activity">
    <reaction evidence="4">
        <text>an N(4)-{beta-D-GlcNAc-(1-&gt;2)-alpha-D-Man-(1-&gt;3)-[beta-D-GlcNAc-(1-&gt;2)-alpha-D-Man-(1-&gt;6)]-beta-D-Man-(1-&gt;4)-beta-D-GlcNAc-(1-&gt;4)-[alpha-L-Fuc-(1-&gt;6)]-beta-D-GlcNAc}-L-asparaginyl-[protein] + UDP-N-acetyl-alpha-D-glucosamine = N(4)-{beta-D-GlcNAc-(1-&gt;2)-[beta-D-GlcNAc-(1-&gt;4)]-alpha-D-Man-(1-&gt;3)-[beta-D-GlcNAc-(1-&gt;2)-alpha-D-Man-(1-&gt;6)]-beta-D-Man-(1-&gt;4)-beta-D-GlcNAc-(1-&gt;4)-[alpha-L-Fuc-(1-&gt;6)]-beta-D-GlcNAc}-asparaginyl-[protein] + UDP + H(+)</text>
        <dbReference type="Rhea" id="RHEA:69623"/>
        <dbReference type="Rhea" id="RHEA-COMP:13532"/>
        <dbReference type="Rhea" id="RHEA-COMP:18198"/>
        <dbReference type="ChEBI" id="CHEBI:15378"/>
        <dbReference type="ChEBI" id="CHEBI:57705"/>
        <dbReference type="ChEBI" id="CHEBI:58223"/>
        <dbReference type="ChEBI" id="CHEBI:137207"/>
        <dbReference type="ChEBI" id="CHEBI:187877"/>
    </reaction>
    <physiologicalReaction direction="left-to-right" evidence="4">
        <dbReference type="Rhea" id="RHEA:69624"/>
    </physiologicalReaction>
</comment>
<comment type="catalytic activity">
    <reaction evidence="4">
        <text>an N(4)-{beta-D-GlcNAc-(1-&gt;2)-alpha-D-Man-(1-&gt;3)-[beta-D-Gal-(1-&gt;4)-beta-D-GlcNAc-(1-&gt;2)-alpha-D-Man-(1-&gt;6)]-beta-D-Man-(1-&gt;4)-beta-D-GlcNAc-(1-&gt;4)-beta-D-GlcNAc}-L-asparaginyl-[protein] + UDP-N-acetyl-alpha-D-glucosamine = an N(4)-{beta-D-GlcNAc-(1-&gt;2)-[beta-D-GlcNAc-(1-&gt;4)]-alpha-D-Man-(1-&gt;3)-[beta-D-Gal-(1-&gt;4)-beta-D-GlcNAc-(1-&gt;2)-alpha-D-Man-(1-&gt;6)]-beta-D-Man-(1-&gt;4)-beta-D-GlcNAc-(1-&gt;4)-beta-D-GlcNAc}-L-asparaginyl-[protein] + UDP + H(+)</text>
        <dbReference type="Rhea" id="RHEA:69627"/>
        <dbReference type="Rhea" id="RHEA-COMP:17737"/>
        <dbReference type="Rhea" id="RHEA-COMP:17738"/>
        <dbReference type="ChEBI" id="CHEBI:15378"/>
        <dbReference type="ChEBI" id="CHEBI:57705"/>
        <dbReference type="ChEBI" id="CHEBI:58223"/>
        <dbReference type="ChEBI" id="CHEBI:187878"/>
        <dbReference type="ChEBI" id="CHEBI:187879"/>
    </reaction>
    <physiologicalReaction direction="left-to-right" evidence="4">
        <dbReference type="Rhea" id="RHEA:69628"/>
    </physiologicalReaction>
</comment>
<comment type="catalytic activity">
    <reaction evidence="4">
        <text>N(4)-{beta-D-GlcNAc-(1-&gt;2)-alpha-D-Man-(1-&gt;3)-[alpha-D-Man-(1-&gt;3)-{alpha-D-Man-(1-&gt;6)}-alpha-D-Man-(1-&gt;6)]-beta-D-Man-(1-&gt;4)-beta-D-GlcNAc-(1-&gt;4)-beta-D-GlcNAc}-asparaginyl-[protein] + UDP-N-acetyl-alpha-D-glucosamine = N(4)-{beta-D-GlcNAc-(1-&gt;2)-[beta-D-GlcNAc-(1-&gt;4)]-alpha-D-Man-(1-&gt;3)-[alpha-D-Man-(1-&gt;3)-{alpha-D-Man-(1-&gt;6)}-alpha-D-Man-(1-&gt;6)]-beta-D-Man-(1-&gt;4)-beta-D-GlcNAc-(1-&gt;4)-beta-D-GlcNAc}-asparaginyl-[protein] + UDP + H(+)</text>
        <dbReference type="Rhea" id="RHEA:69631"/>
        <dbReference type="Rhea" id="RHEA-COMP:17739"/>
        <dbReference type="Rhea" id="RHEA-COMP:17740"/>
        <dbReference type="ChEBI" id="CHEBI:15378"/>
        <dbReference type="ChEBI" id="CHEBI:57705"/>
        <dbReference type="ChEBI" id="CHEBI:58223"/>
        <dbReference type="ChEBI" id="CHEBI:187880"/>
        <dbReference type="ChEBI" id="CHEBI:187881"/>
    </reaction>
    <physiologicalReaction direction="left-to-right" evidence="4">
        <dbReference type="Rhea" id="RHEA:69632"/>
    </physiologicalReaction>
</comment>
<comment type="catalytic activity">
    <reaction evidence="4">
        <text>N(4)-{beta-D-GlcNAc-(1-&gt;2)-alpha-D-Man-(1-&gt;3)-beta-D-Man-(1-&gt;4)-beta-D-GlcNAc-(1-&gt;4)-beta-D-GlcNAc}-asparaginyl-[protein] + UDP-N-acetyl-alpha-D-glucosamine = N(4)-{beta-D-GlcNAc-(1-&gt;2)-[beta-D-GlcNAc-(1-&gt;4)]-alpha-D-Man-(1-&gt;3)-beta-D-Man-(1-&gt;4)-beta-D-GlcNAc-(1-&gt;4)-beta-D-GlcNAc}-asparaginyl-[protein] + UDP + H(+)</text>
        <dbReference type="Rhea" id="RHEA:69635"/>
        <dbReference type="Rhea" id="RHEA-COMP:17741"/>
        <dbReference type="Rhea" id="RHEA-COMP:17742"/>
        <dbReference type="ChEBI" id="CHEBI:15378"/>
        <dbReference type="ChEBI" id="CHEBI:57705"/>
        <dbReference type="ChEBI" id="CHEBI:58223"/>
        <dbReference type="ChEBI" id="CHEBI:187882"/>
        <dbReference type="ChEBI" id="CHEBI:187883"/>
    </reaction>
    <physiologicalReaction direction="left-to-right" evidence="4">
        <dbReference type="Rhea" id="RHEA:69636"/>
    </physiologicalReaction>
</comment>
<comment type="cofactor">
    <cofactor evidence="1">
        <name>a divalent metal cation</name>
        <dbReference type="ChEBI" id="CHEBI:60240"/>
    </cofactor>
</comment>
<comment type="activity regulation">
    <text evidence="1">Inhibited by UDP.</text>
</comment>
<comment type="pathway">
    <text evidence="1">Protein modification; protein glycosylation.</text>
</comment>
<comment type="subcellular location">
    <subcellularLocation>
        <location evidence="3">Golgi apparatus membrane</location>
        <topology evidence="3">Single-pass type II membrane protein</topology>
    </subcellularLocation>
</comment>
<comment type="subcellular location">
    <molecule>Alpha-1,3-mannosyl-glycoprotein 4-beta-N-acetylglucosaminyltransferase A soluble form</molecule>
    <subcellularLocation>
        <location evidence="1">Secreted</location>
    </subcellularLocation>
</comment>
<comment type="PTM">
    <text evidence="1">N-glycosylated.</text>
</comment>
<comment type="similarity">
    <text evidence="6">Belongs to the glycosyltransferase 54 family.</text>
</comment>
<dbReference type="EC" id="2.4.1.145" evidence="1"/>
<dbReference type="EMBL" id="BC088215">
    <property type="protein sequence ID" value="AAH88215.1"/>
    <property type="molecule type" value="mRNA"/>
</dbReference>
<dbReference type="RefSeq" id="NP_001012225.1">
    <property type="nucleotide sequence ID" value="NM_001012225.2"/>
</dbReference>
<dbReference type="RefSeq" id="NP_001153627.1">
    <property type="nucleotide sequence ID" value="NM_001160155.1"/>
</dbReference>
<dbReference type="RefSeq" id="XP_063123578.1">
    <property type="nucleotide sequence ID" value="XM_063267508.1"/>
</dbReference>
<dbReference type="SMR" id="Q5M854"/>
<dbReference type="FunCoup" id="Q5M854">
    <property type="interactions" value="964"/>
</dbReference>
<dbReference type="STRING" id="10116.ENSRNOP00000024701"/>
<dbReference type="CAZy" id="GT54">
    <property type="family name" value="Glycosyltransferase Family 54"/>
</dbReference>
<dbReference type="GlyCosmos" id="Q5M854">
    <property type="glycosylation" value="1 site, No reported glycans"/>
</dbReference>
<dbReference type="GlyGen" id="Q5M854">
    <property type="glycosylation" value="2 sites"/>
</dbReference>
<dbReference type="iPTMnet" id="Q5M854"/>
<dbReference type="PhosphoSitePlus" id="Q5M854"/>
<dbReference type="PaxDb" id="10116-ENSRNOP00000024701"/>
<dbReference type="GeneID" id="367252"/>
<dbReference type="KEGG" id="rno:367252"/>
<dbReference type="UCSC" id="RGD:1305650">
    <property type="organism name" value="rat"/>
</dbReference>
<dbReference type="AGR" id="RGD:1305650"/>
<dbReference type="CTD" id="11320"/>
<dbReference type="RGD" id="1305650">
    <property type="gene designation" value="Mgat4a"/>
</dbReference>
<dbReference type="eggNOG" id="ENOG502QPQJ">
    <property type="taxonomic scope" value="Eukaryota"/>
</dbReference>
<dbReference type="InParanoid" id="Q5M854"/>
<dbReference type="OrthoDB" id="2016523at2759"/>
<dbReference type="PhylomeDB" id="Q5M854"/>
<dbReference type="Reactome" id="R-RNO-381426">
    <property type="pathway name" value="Regulation of Insulin-like Growth Factor (IGF) transport and uptake by Insulin-like Growth Factor Binding Proteins (IGFBPs)"/>
</dbReference>
<dbReference type="Reactome" id="R-RNO-8957275">
    <property type="pathway name" value="Post-translational protein phosphorylation"/>
</dbReference>
<dbReference type="Reactome" id="R-RNO-975577">
    <property type="pathway name" value="N-Glycan antennae elongation"/>
</dbReference>
<dbReference type="UniPathway" id="UPA00378"/>
<dbReference type="PRO" id="PR:Q5M854"/>
<dbReference type="Proteomes" id="UP000002494">
    <property type="component" value="Unplaced"/>
</dbReference>
<dbReference type="GO" id="GO:0005783">
    <property type="term" value="C:endoplasmic reticulum"/>
    <property type="evidence" value="ECO:0000318"/>
    <property type="project" value="GO_Central"/>
</dbReference>
<dbReference type="GO" id="GO:0005793">
    <property type="term" value="C:endoplasmic reticulum-Golgi intermediate compartment"/>
    <property type="evidence" value="ECO:0000318"/>
    <property type="project" value="GO_Central"/>
</dbReference>
<dbReference type="GO" id="GO:0005576">
    <property type="term" value="C:extracellular region"/>
    <property type="evidence" value="ECO:0007669"/>
    <property type="project" value="UniProtKB-SubCell"/>
</dbReference>
<dbReference type="GO" id="GO:0000139">
    <property type="term" value="C:Golgi membrane"/>
    <property type="evidence" value="ECO:0007669"/>
    <property type="project" value="UniProtKB-SubCell"/>
</dbReference>
<dbReference type="GO" id="GO:0005795">
    <property type="term" value="C:Golgi stack"/>
    <property type="evidence" value="ECO:0000318"/>
    <property type="project" value="GO_Central"/>
</dbReference>
<dbReference type="GO" id="GO:0005777">
    <property type="term" value="C:peroxisome"/>
    <property type="evidence" value="ECO:0000250"/>
    <property type="project" value="UniProtKB"/>
</dbReference>
<dbReference type="GO" id="GO:0008375">
    <property type="term" value="F:acetylglucosaminyltransferase activity"/>
    <property type="evidence" value="ECO:0000266"/>
    <property type="project" value="RGD"/>
</dbReference>
<dbReference type="GO" id="GO:0008453">
    <property type="term" value="F:alanine-glyoxylate transaminase activity"/>
    <property type="evidence" value="ECO:0000250"/>
    <property type="project" value="UniProtKB"/>
</dbReference>
<dbReference type="GO" id="GO:0008454">
    <property type="term" value="F:alpha-1,3-mannosylglycoprotein 4-beta-N-acetylglucosaminyltransferase activity"/>
    <property type="evidence" value="ECO:0000250"/>
    <property type="project" value="UniProtKB"/>
</dbReference>
<dbReference type="GO" id="GO:0016757">
    <property type="term" value="F:glycosyltransferase activity"/>
    <property type="evidence" value="ECO:0000266"/>
    <property type="project" value="RGD"/>
</dbReference>
<dbReference type="GO" id="GO:0046872">
    <property type="term" value="F:metal ion binding"/>
    <property type="evidence" value="ECO:0007669"/>
    <property type="project" value="UniProtKB-KW"/>
</dbReference>
<dbReference type="GO" id="GO:0042803">
    <property type="term" value="F:protein homodimerization activity"/>
    <property type="evidence" value="ECO:0000250"/>
    <property type="project" value="UniProtKB"/>
</dbReference>
<dbReference type="GO" id="GO:0046487">
    <property type="term" value="P:glyoxylate metabolic process"/>
    <property type="evidence" value="ECO:0000250"/>
    <property type="project" value="UniProtKB"/>
</dbReference>
<dbReference type="GO" id="GO:0006491">
    <property type="term" value="P:N-glycan processing"/>
    <property type="evidence" value="ECO:0000250"/>
    <property type="project" value="UniProtKB"/>
</dbReference>
<dbReference type="GO" id="GO:0006486">
    <property type="term" value="P:protein glycosylation"/>
    <property type="evidence" value="ECO:0000266"/>
    <property type="project" value="RGD"/>
</dbReference>
<dbReference type="GO" id="GO:0006487">
    <property type="term" value="P:protein N-linked glycosylation"/>
    <property type="evidence" value="ECO:0000266"/>
    <property type="project" value="RGD"/>
</dbReference>
<dbReference type="InterPro" id="IPR006759">
    <property type="entry name" value="Glyco_transf_54"/>
</dbReference>
<dbReference type="InterPro" id="IPR056576">
    <property type="entry name" value="MGAT4_A/B/C_C"/>
</dbReference>
<dbReference type="PANTHER" id="PTHR12062:SF4">
    <property type="entry name" value="ALPHA-1,3-MANNOSYL-GLYCOPROTEIN 4-BETA-N-ACETYLGLUCOSAMINYLTRANSFERASE A"/>
    <property type="match status" value="1"/>
</dbReference>
<dbReference type="PANTHER" id="PTHR12062">
    <property type="entry name" value="N-ACETYLGLUCOSAMINYLTRANSFERASE VI"/>
    <property type="match status" value="1"/>
</dbReference>
<dbReference type="Pfam" id="PF04666">
    <property type="entry name" value="MGAT4_cons"/>
    <property type="match status" value="1"/>
</dbReference>
<dbReference type="Pfam" id="PF23524">
    <property type="entry name" value="MGAT4A_C"/>
    <property type="match status" value="1"/>
</dbReference>
<feature type="chain" id="PRO_0000288589" description="Alpha-1,3-mannosyl-glycoprotein 4-beta-N-acetylglucosaminyltransferase A">
    <location>
        <begin position="1"/>
        <end position="526"/>
    </location>
</feature>
<feature type="chain" id="PRO_0000288590" description="Alpha-1,3-mannosyl-glycoprotein 4-beta-N-acetylglucosaminyltransferase A soluble form" evidence="1">
    <location>
        <begin position="84"/>
        <end position="526"/>
    </location>
</feature>
<feature type="topological domain" description="Cytoplasmic" evidence="5">
    <location>
        <begin position="1"/>
        <end position="6"/>
    </location>
</feature>
<feature type="transmembrane region" description="Helical; Signal-anchor for type II membrane protein" evidence="5">
    <location>
        <begin position="7"/>
        <end position="27"/>
    </location>
</feature>
<feature type="topological domain" description="Lumenal" evidence="5">
    <location>
        <begin position="28"/>
        <end position="526"/>
    </location>
</feature>
<feature type="coiled-coil region" evidence="5">
    <location>
        <begin position="28"/>
        <end position="63"/>
    </location>
</feature>
<feature type="modified residue" description="Phosphoserine" evidence="4">
    <location>
        <position position="465"/>
    </location>
</feature>
<feature type="glycosylation site" description="N-linked (GlcNAc...) asparagine" evidence="5">
    <location>
        <position position="449"/>
    </location>
</feature>
<evidence type="ECO:0000250" key="1">
    <source>
        <dbReference type="UniProtKB" id="O77836"/>
    </source>
</evidence>
<evidence type="ECO:0000250" key="2">
    <source>
        <dbReference type="UniProtKB" id="Q812G0"/>
    </source>
</evidence>
<evidence type="ECO:0000250" key="3">
    <source>
        <dbReference type="UniProtKB" id="Q9D4R2"/>
    </source>
</evidence>
<evidence type="ECO:0000250" key="4">
    <source>
        <dbReference type="UniProtKB" id="Q9UM21"/>
    </source>
</evidence>
<evidence type="ECO:0000255" key="5"/>
<evidence type="ECO:0000305" key="6"/>
<evidence type="ECO:0000312" key="7">
    <source>
        <dbReference type="RGD" id="1305650"/>
    </source>
</evidence>
<organism>
    <name type="scientific">Rattus norvegicus</name>
    <name type="common">Rat</name>
    <dbReference type="NCBI Taxonomy" id="10116"/>
    <lineage>
        <taxon>Eukaryota</taxon>
        <taxon>Metazoa</taxon>
        <taxon>Chordata</taxon>
        <taxon>Craniata</taxon>
        <taxon>Vertebrata</taxon>
        <taxon>Euteleostomi</taxon>
        <taxon>Mammalia</taxon>
        <taxon>Eutheria</taxon>
        <taxon>Euarchontoglires</taxon>
        <taxon>Glires</taxon>
        <taxon>Rodentia</taxon>
        <taxon>Myomorpha</taxon>
        <taxon>Muroidea</taxon>
        <taxon>Muridae</taxon>
        <taxon>Murinae</taxon>
        <taxon>Rattus</taxon>
    </lineage>
</organism>
<name>MGT4A_RAT</name>
<keyword id="KW-0175">Coiled coil</keyword>
<keyword id="KW-0325">Glycoprotein</keyword>
<keyword id="KW-0328">Glycosyltransferase</keyword>
<keyword id="KW-0333">Golgi apparatus</keyword>
<keyword id="KW-0472">Membrane</keyword>
<keyword id="KW-0479">Metal-binding</keyword>
<keyword id="KW-0597">Phosphoprotein</keyword>
<keyword id="KW-1185">Reference proteome</keyword>
<keyword id="KW-0964">Secreted</keyword>
<keyword id="KW-0735">Signal-anchor</keyword>
<keyword id="KW-0808">Transferase</keyword>
<keyword id="KW-0812">Transmembrane</keyword>
<keyword id="KW-1133">Transmembrane helix</keyword>
<protein>
    <recommendedName>
        <fullName evidence="6">Alpha-1,3-mannosyl-glycoprotein 4-beta-N-acetylglucosaminyltransferase A</fullName>
        <ecNumber evidence="1">2.4.1.145</ecNumber>
    </recommendedName>
    <alternativeName>
        <fullName>N-glycosyl-oligosaccharide-glycoprotein N-acetylglucosaminyltransferase IVa</fullName>
        <shortName>GlcNAc-T IVa</shortName>
        <shortName>GnT-IVa</shortName>
        <shortName>N-acetylglucosaminyltransferase IVa</shortName>
    </alternativeName>
    <alternativeName>
        <fullName>UDP-N-acetylglucosamine: alpha-1,3-D-mannoside beta-1,4-N-acetylglucosaminyltransferase IVa</fullName>
    </alternativeName>
    <component>
        <recommendedName>
            <fullName>Alpha-1,3-mannosyl-glycoprotein 4-beta-N-acetylglucosaminyltransferase A soluble form</fullName>
        </recommendedName>
    </component>
</protein>
<gene>
    <name evidence="7" type="primary">Mgat4a</name>
</gene>
<proteinExistence type="evidence at transcript level"/>
<reference key="1">
    <citation type="journal article" date="2004" name="Genome Res.">
        <title>The status, quality, and expansion of the NIH full-length cDNA project: the Mammalian Gene Collection (MGC).</title>
        <authorList>
            <consortium name="The MGC Project Team"/>
        </authorList>
    </citation>
    <scope>NUCLEOTIDE SEQUENCE [LARGE SCALE MRNA]</scope>
    <source>
        <tissue>Thymus</tissue>
    </source>
</reference>